<evidence type="ECO:0000255" key="1">
    <source>
        <dbReference type="HAMAP-Rule" id="MF_00183"/>
    </source>
</evidence>
<accession>Q5H1E7</accession>
<proteinExistence type="inferred from homology"/>
<feature type="chain" id="PRO_0000163742" description="1-deoxy-D-xylulose 5-phosphate reductoisomerase">
    <location>
        <begin position="1"/>
        <end position="396"/>
    </location>
</feature>
<feature type="binding site" evidence="1">
    <location>
        <position position="15"/>
    </location>
    <ligand>
        <name>NADPH</name>
        <dbReference type="ChEBI" id="CHEBI:57783"/>
    </ligand>
</feature>
<feature type="binding site" evidence="1">
    <location>
        <position position="16"/>
    </location>
    <ligand>
        <name>NADPH</name>
        <dbReference type="ChEBI" id="CHEBI:57783"/>
    </ligand>
</feature>
<feature type="binding site" evidence="1">
    <location>
        <position position="17"/>
    </location>
    <ligand>
        <name>NADPH</name>
        <dbReference type="ChEBI" id="CHEBI:57783"/>
    </ligand>
</feature>
<feature type="binding site" evidence="1">
    <location>
        <position position="18"/>
    </location>
    <ligand>
        <name>NADPH</name>
        <dbReference type="ChEBI" id="CHEBI:57783"/>
    </ligand>
</feature>
<feature type="binding site" evidence="1">
    <location>
        <position position="41"/>
    </location>
    <ligand>
        <name>NADPH</name>
        <dbReference type="ChEBI" id="CHEBI:57783"/>
    </ligand>
</feature>
<feature type="binding site" evidence="1">
    <location>
        <position position="129"/>
    </location>
    <ligand>
        <name>NADPH</name>
        <dbReference type="ChEBI" id="CHEBI:57783"/>
    </ligand>
</feature>
<feature type="binding site" evidence="1">
    <location>
        <position position="130"/>
    </location>
    <ligand>
        <name>1-deoxy-D-xylulose 5-phosphate</name>
        <dbReference type="ChEBI" id="CHEBI:57792"/>
    </ligand>
</feature>
<feature type="binding site" evidence="1">
    <location>
        <position position="131"/>
    </location>
    <ligand>
        <name>NADPH</name>
        <dbReference type="ChEBI" id="CHEBI:57783"/>
    </ligand>
</feature>
<feature type="binding site" evidence="1">
    <location>
        <position position="155"/>
    </location>
    <ligand>
        <name>Mn(2+)</name>
        <dbReference type="ChEBI" id="CHEBI:29035"/>
    </ligand>
</feature>
<feature type="binding site" evidence="1">
    <location>
        <position position="156"/>
    </location>
    <ligand>
        <name>1-deoxy-D-xylulose 5-phosphate</name>
        <dbReference type="ChEBI" id="CHEBI:57792"/>
    </ligand>
</feature>
<feature type="binding site" evidence="1">
    <location>
        <position position="157"/>
    </location>
    <ligand>
        <name>1-deoxy-D-xylulose 5-phosphate</name>
        <dbReference type="ChEBI" id="CHEBI:57792"/>
    </ligand>
</feature>
<feature type="binding site" evidence="1">
    <location>
        <position position="157"/>
    </location>
    <ligand>
        <name>Mn(2+)</name>
        <dbReference type="ChEBI" id="CHEBI:29035"/>
    </ligand>
</feature>
<feature type="binding site" evidence="1">
    <location>
        <position position="182"/>
    </location>
    <ligand>
        <name>1-deoxy-D-xylulose 5-phosphate</name>
        <dbReference type="ChEBI" id="CHEBI:57792"/>
    </ligand>
</feature>
<feature type="binding site" evidence="1">
    <location>
        <position position="205"/>
    </location>
    <ligand>
        <name>1-deoxy-D-xylulose 5-phosphate</name>
        <dbReference type="ChEBI" id="CHEBI:57792"/>
    </ligand>
</feature>
<feature type="binding site" evidence="1">
    <location>
        <position position="211"/>
    </location>
    <ligand>
        <name>NADPH</name>
        <dbReference type="ChEBI" id="CHEBI:57783"/>
    </ligand>
</feature>
<feature type="binding site" evidence="1">
    <location>
        <position position="218"/>
    </location>
    <ligand>
        <name>1-deoxy-D-xylulose 5-phosphate</name>
        <dbReference type="ChEBI" id="CHEBI:57792"/>
    </ligand>
</feature>
<feature type="binding site" evidence="1">
    <location>
        <position position="223"/>
    </location>
    <ligand>
        <name>1-deoxy-D-xylulose 5-phosphate</name>
        <dbReference type="ChEBI" id="CHEBI:57792"/>
    </ligand>
</feature>
<feature type="binding site" evidence="1">
    <location>
        <position position="224"/>
    </location>
    <ligand>
        <name>1-deoxy-D-xylulose 5-phosphate</name>
        <dbReference type="ChEBI" id="CHEBI:57792"/>
    </ligand>
</feature>
<feature type="binding site" evidence="1">
    <location>
        <position position="227"/>
    </location>
    <ligand>
        <name>1-deoxy-D-xylulose 5-phosphate</name>
        <dbReference type="ChEBI" id="CHEBI:57792"/>
    </ligand>
</feature>
<feature type="binding site" evidence="1">
    <location>
        <position position="227"/>
    </location>
    <ligand>
        <name>Mn(2+)</name>
        <dbReference type="ChEBI" id="CHEBI:29035"/>
    </ligand>
</feature>
<name>DXR_XANOR</name>
<protein>
    <recommendedName>
        <fullName evidence="1">1-deoxy-D-xylulose 5-phosphate reductoisomerase</fullName>
        <shortName evidence="1">DXP reductoisomerase</shortName>
        <ecNumber evidence="1">1.1.1.267</ecNumber>
    </recommendedName>
    <alternativeName>
        <fullName evidence="1">1-deoxyxylulose-5-phosphate reductoisomerase</fullName>
    </alternativeName>
    <alternativeName>
        <fullName evidence="1">2-C-methyl-D-erythritol 4-phosphate synthase</fullName>
    </alternativeName>
</protein>
<reference key="1">
    <citation type="journal article" date="2005" name="Nucleic Acids Res.">
        <title>The genome sequence of Xanthomonas oryzae pathovar oryzae KACC10331, the bacterial blight pathogen of rice.</title>
        <authorList>
            <person name="Lee B.-M."/>
            <person name="Park Y.-J."/>
            <person name="Park D.-S."/>
            <person name="Kang H.-W."/>
            <person name="Kim J.-G."/>
            <person name="Song E.-S."/>
            <person name="Park I.-C."/>
            <person name="Yoon U.-H."/>
            <person name="Hahn J.-H."/>
            <person name="Koo B.-S."/>
            <person name="Lee G.-B."/>
            <person name="Kim H."/>
            <person name="Park H.-S."/>
            <person name="Yoon K.-O."/>
            <person name="Kim J.-H."/>
            <person name="Jung C.-H."/>
            <person name="Koh N.-H."/>
            <person name="Seo J.-S."/>
            <person name="Go S.-J."/>
        </authorList>
    </citation>
    <scope>NUCLEOTIDE SEQUENCE [LARGE SCALE GENOMIC DNA]</scope>
    <source>
        <strain>KACC10331 / KXO85</strain>
    </source>
</reference>
<keyword id="KW-0414">Isoprene biosynthesis</keyword>
<keyword id="KW-0464">Manganese</keyword>
<keyword id="KW-0479">Metal-binding</keyword>
<keyword id="KW-0521">NADP</keyword>
<keyword id="KW-0560">Oxidoreductase</keyword>
<keyword id="KW-1185">Reference proteome</keyword>
<organism>
    <name type="scientific">Xanthomonas oryzae pv. oryzae (strain KACC10331 / KXO85)</name>
    <dbReference type="NCBI Taxonomy" id="291331"/>
    <lineage>
        <taxon>Bacteria</taxon>
        <taxon>Pseudomonadati</taxon>
        <taxon>Pseudomonadota</taxon>
        <taxon>Gammaproteobacteria</taxon>
        <taxon>Lysobacterales</taxon>
        <taxon>Lysobacteraceae</taxon>
        <taxon>Xanthomonas</taxon>
    </lineage>
</organism>
<comment type="function">
    <text evidence="1">Catalyzes the NADPH-dependent rearrangement and reduction of 1-deoxy-D-xylulose-5-phosphate (DXP) to 2-C-methyl-D-erythritol 4-phosphate (MEP).</text>
</comment>
<comment type="catalytic activity">
    <reaction evidence="1">
        <text>2-C-methyl-D-erythritol 4-phosphate + NADP(+) = 1-deoxy-D-xylulose 5-phosphate + NADPH + H(+)</text>
        <dbReference type="Rhea" id="RHEA:13717"/>
        <dbReference type="ChEBI" id="CHEBI:15378"/>
        <dbReference type="ChEBI" id="CHEBI:57783"/>
        <dbReference type="ChEBI" id="CHEBI:57792"/>
        <dbReference type="ChEBI" id="CHEBI:58262"/>
        <dbReference type="ChEBI" id="CHEBI:58349"/>
        <dbReference type="EC" id="1.1.1.267"/>
    </reaction>
    <physiologicalReaction direction="right-to-left" evidence="1">
        <dbReference type="Rhea" id="RHEA:13719"/>
    </physiologicalReaction>
</comment>
<comment type="cofactor">
    <cofactor evidence="1">
        <name>Mg(2+)</name>
        <dbReference type="ChEBI" id="CHEBI:18420"/>
    </cofactor>
    <cofactor evidence="1">
        <name>Mn(2+)</name>
        <dbReference type="ChEBI" id="CHEBI:29035"/>
    </cofactor>
</comment>
<comment type="pathway">
    <text evidence="1">Isoprenoid biosynthesis; isopentenyl diphosphate biosynthesis via DXP pathway; isopentenyl diphosphate from 1-deoxy-D-xylulose 5-phosphate: step 1/6.</text>
</comment>
<comment type="similarity">
    <text evidence="1">Belongs to the DXR family.</text>
</comment>
<dbReference type="EC" id="1.1.1.267" evidence="1"/>
<dbReference type="EMBL" id="AE013598">
    <property type="protein sequence ID" value="AAW75224.1"/>
    <property type="molecule type" value="Genomic_DNA"/>
</dbReference>
<dbReference type="SMR" id="Q5H1E7"/>
<dbReference type="STRING" id="291331.XOO1970"/>
<dbReference type="KEGG" id="xoo:XOO1970"/>
<dbReference type="HOGENOM" id="CLU_035714_4_0_6"/>
<dbReference type="UniPathway" id="UPA00056">
    <property type="reaction ID" value="UER00092"/>
</dbReference>
<dbReference type="Proteomes" id="UP000006735">
    <property type="component" value="Chromosome"/>
</dbReference>
<dbReference type="GO" id="GO:0030604">
    <property type="term" value="F:1-deoxy-D-xylulose-5-phosphate reductoisomerase activity"/>
    <property type="evidence" value="ECO:0007669"/>
    <property type="project" value="UniProtKB-UniRule"/>
</dbReference>
<dbReference type="GO" id="GO:0030145">
    <property type="term" value="F:manganese ion binding"/>
    <property type="evidence" value="ECO:0007669"/>
    <property type="project" value="TreeGrafter"/>
</dbReference>
<dbReference type="GO" id="GO:0070402">
    <property type="term" value="F:NADPH binding"/>
    <property type="evidence" value="ECO:0007669"/>
    <property type="project" value="InterPro"/>
</dbReference>
<dbReference type="GO" id="GO:0051484">
    <property type="term" value="P:isopentenyl diphosphate biosynthetic process, methylerythritol 4-phosphate pathway involved in terpenoid biosynthetic process"/>
    <property type="evidence" value="ECO:0007669"/>
    <property type="project" value="TreeGrafter"/>
</dbReference>
<dbReference type="FunFam" id="3.40.50.720:FF:000045">
    <property type="entry name" value="1-deoxy-D-xylulose 5-phosphate reductoisomerase"/>
    <property type="match status" value="1"/>
</dbReference>
<dbReference type="Gene3D" id="1.10.1740.10">
    <property type="match status" value="1"/>
</dbReference>
<dbReference type="Gene3D" id="3.40.50.720">
    <property type="entry name" value="NAD(P)-binding Rossmann-like Domain"/>
    <property type="match status" value="1"/>
</dbReference>
<dbReference type="HAMAP" id="MF_00183">
    <property type="entry name" value="DXP_reductoisom"/>
    <property type="match status" value="1"/>
</dbReference>
<dbReference type="InterPro" id="IPR003821">
    <property type="entry name" value="DXP_reductoisomerase"/>
</dbReference>
<dbReference type="InterPro" id="IPR013644">
    <property type="entry name" value="DXP_reductoisomerase_C"/>
</dbReference>
<dbReference type="InterPro" id="IPR013512">
    <property type="entry name" value="DXP_reductoisomerase_N"/>
</dbReference>
<dbReference type="InterPro" id="IPR026877">
    <property type="entry name" value="DXPR_C"/>
</dbReference>
<dbReference type="InterPro" id="IPR036169">
    <property type="entry name" value="DXPR_C_sf"/>
</dbReference>
<dbReference type="InterPro" id="IPR036291">
    <property type="entry name" value="NAD(P)-bd_dom_sf"/>
</dbReference>
<dbReference type="NCBIfam" id="TIGR00243">
    <property type="entry name" value="Dxr"/>
    <property type="match status" value="1"/>
</dbReference>
<dbReference type="NCBIfam" id="NF009114">
    <property type="entry name" value="PRK12464.1"/>
    <property type="match status" value="1"/>
</dbReference>
<dbReference type="PANTHER" id="PTHR30525">
    <property type="entry name" value="1-DEOXY-D-XYLULOSE 5-PHOSPHATE REDUCTOISOMERASE"/>
    <property type="match status" value="1"/>
</dbReference>
<dbReference type="PANTHER" id="PTHR30525:SF0">
    <property type="entry name" value="1-DEOXY-D-XYLULOSE 5-PHOSPHATE REDUCTOISOMERASE, CHLOROPLASTIC"/>
    <property type="match status" value="1"/>
</dbReference>
<dbReference type="Pfam" id="PF08436">
    <property type="entry name" value="DXP_redisom_C"/>
    <property type="match status" value="1"/>
</dbReference>
<dbReference type="Pfam" id="PF02670">
    <property type="entry name" value="DXP_reductoisom"/>
    <property type="match status" value="1"/>
</dbReference>
<dbReference type="Pfam" id="PF13288">
    <property type="entry name" value="DXPR_C"/>
    <property type="match status" value="1"/>
</dbReference>
<dbReference type="PIRSF" id="PIRSF006205">
    <property type="entry name" value="Dxp_reductismrs"/>
    <property type="match status" value="1"/>
</dbReference>
<dbReference type="SUPFAM" id="SSF69055">
    <property type="entry name" value="1-deoxy-D-xylulose-5-phosphate reductoisomerase, C-terminal domain"/>
    <property type="match status" value="1"/>
</dbReference>
<dbReference type="SUPFAM" id="SSF55347">
    <property type="entry name" value="Glyceraldehyde-3-phosphate dehydrogenase-like, C-terminal domain"/>
    <property type="match status" value="1"/>
</dbReference>
<dbReference type="SUPFAM" id="SSF51735">
    <property type="entry name" value="NAD(P)-binding Rossmann-fold domains"/>
    <property type="match status" value="1"/>
</dbReference>
<gene>
    <name evidence="1" type="primary">dxr</name>
    <name type="ordered locus">XOO1970</name>
</gene>
<sequence>MAGSSLRQVAVFGATGSIGASALDVIARHPERLRASVLSAGSKVEDLLALCAAHQPAHALIADAALYPALRDGLRALGLATQAHAGAEALDALAGSDACDTVVAAIVGAAGLPSTLAAARAGKRLLLANKESLVLAGELLTRTATAAGAEIIPIDSEHSAIFQCLRSCDAGRGVRRVILTASGGPFRGRDRAGLAAVTPAQAVAHPKWSMGPKISVDSATLMNKGLEVIEAHHLFGLPGEQIDVLVHPQSLVHSLVEFVDGSTLAQLGLPDMRTTLAVGLAWPERVESGVGGLDLLSQGRLDFEAPDTAAFPCLRLAWDALRAGGTAPAILNAANEVAVSAFLQGQVGFLAIPALVEHALTTLPRHNADTLDTLLFADAQARQITERALAHHALHA</sequence>